<gene>
    <name type="primary">PRUA1</name>
</gene>
<accession>O24248</accession>
<organism>
    <name type="scientific">Prunus avium</name>
    <name type="common">Cherry</name>
    <name type="synonym">Cerasus avium</name>
    <dbReference type="NCBI Taxonomy" id="42229"/>
    <lineage>
        <taxon>Eukaryota</taxon>
        <taxon>Viridiplantae</taxon>
        <taxon>Streptophyta</taxon>
        <taxon>Embryophyta</taxon>
        <taxon>Tracheophyta</taxon>
        <taxon>Spermatophyta</taxon>
        <taxon>Magnoliopsida</taxon>
        <taxon>eudicotyledons</taxon>
        <taxon>Gunneridae</taxon>
        <taxon>Pentapetalae</taxon>
        <taxon>rosids</taxon>
        <taxon>fabids</taxon>
        <taxon>Rosales</taxon>
        <taxon>Rosaceae</taxon>
        <taxon>Amygdaloideae</taxon>
        <taxon>Amygdaleae</taxon>
        <taxon>Prunus</taxon>
    </lineage>
</organism>
<protein>
    <recommendedName>
        <fullName>Major allergen Pru av 1</fullName>
    </recommendedName>
    <alternativeName>
        <fullName>Allergen Pru a 1</fullName>
    </alternativeName>
    <allergenName>Pru av 1</allergenName>
</protein>
<feature type="chain" id="PRO_0000154202" description="Major allergen Pru av 1">
    <location>
        <begin position="1"/>
        <end position="160"/>
    </location>
</feature>
<feature type="strand" evidence="2">
    <location>
        <begin position="3"/>
        <end position="14"/>
    </location>
</feature>
<feature type="helix" evidence="2">
    <location>
        <begin position="16"/>
        <end position="23"/>
    </location>
</feature>
<feature type="turn" evidence="2">
    <location>
        <begin position="24"/>
        <end position="26"/>
    </location>
</feature>
<feature type="helix" evidence="2">
    <location>
        <begin position="27"/>
        <end position="34"/>
    </location>
</feature>
<feature type="turn" evidence="2">
    <location>
        <begin position="36"/>
        <end position="38"/>
    </location>
</feature>
<feature type="strand" evidence="2">
    <location>
        <begin position="39"/>
        <end position="50"/>
    </location>
</feature>
<feature type="strand" evidence="2">
    <location>
        <begin position="54"/>
        <end position="59"/>
    </location>
</feature>
<feature type="strand" evidence="2">
    <location>
        <begin position="62"/>
        <end position="64"/>
    </location>
</feature>
<feature type="strand" evidence="2">
    <location>
        <begin position="66"/>
        <end position="75"/>
    </location>
</feature>
<feature type="turn" evidence="2">
    <location>
        <begin position="77"/>
        <end position="79"/>
    </location>
</feature>
<feature type="strand" evidence="2">
    <location>
        <begin position="81"/>
        <end position="86"/>
    </location>
</feature>
<feature type="turn" evidence="2">
    <location>
        <begin position="90"/>
        <end position="92"/>
    </location>
</feature>
<feature type="helix" evidence="2">
    <location>
        <begin position="93"/>
        <end position="95"/>
    </location>
</feature>
<feature type="strand" evidence="2">
    <location>
        <begin position="96"/>
        <end position="105"/>
    </location>
</feature>
<feature type="strand" evidence="2">
    <location>
        <begin position="111"/>
        <end position="123"/>
    </location>
</feature>
<feature type="helix" evidence="2">
    <location>
        <begin position="131"/>
        <end position="154"/>
    </location>
</feature>
<feature type="turn" evidence="3">
    <location>
        <begin position="156"/>
        <end position="159"/>
    </location>
</feature>
<evidence type="ECO:0000305" key="1"/>
<evidence type="ECO:0007829" key="2">
    <source>
        <dbReference type="PDB" id="1E09"/>
    </source>
</evidence>
<evidence type="ECO:0007829" key="3">
    <source>
        <dbReference type="PDB" id="1H2O"/>
    </source>
</evidence>
<name>PRU1_PRUAV</name>
<dbReference type="EMBL" id="U66076">
    <property type="protein sequence ID" value="AAC02632.1"/>
    <property type="molecule type" value="mRNA"/>
</dbReference>
<dbReference type="PDB" id="1E09">
    <property type="method" value="NMR"/>
    <property type="chains" value="A=2-160"/>
</dbReference>
<dbReference type="PDB" id="1H2O">
    <property type="method" value="NMR"/>
    <property type="chains" value="A=2-160"/>
</dbReference>
<dbReference type="PDBsum" id="1E09"/>
<dbReference type="PDBsum" id="1H2O"/>
<dbReference type="BMRB" id="O24248"/>
<dbReference type="SMR" id="O24248"/>
<dbReference type="Allergome" id="1316">
    <property type="allergen name" value="Pru av 1.0101"/>
</dbReference>
<dbReference type="Allergome" id="597">
    <property type="allergen name" value="Pru av 1"/>
</dbReference>
<dbReference type="EnsemblPlants" id="Pav_sc0000174.1_g1420.1.mk:mrna">
    <property type="protein sequence ID" value="Pav_sc0000174.1_g1420.1.mk:mrna"/>
    <property type="gene ID" value="Pav_sc0000174.1_g1420.1.mk"/>
</dbReference>
<dbReference type="Gramene" id="Pav_sc0000174.1_g1420.1.mk:mrna">
    <property type="protein sequence ID" value="Pav_sc0000174.1_g1420.1.mk:mrna"/>
    <property type="gene ID" value="Pav_sc0000174.1_g1420.1.mk"/>
</dbReference>
<dbReference type="EvolutionaryTrace" id="O24248"/>
<dbReference type="Proteomes" id="UP000515124">
    <property type="component" value="Unplaced"/>
</dbReference>
<dbReference type="GO" id="GO:0005737">
    <property type="term" value="C:cytoplasm"/>
    <property type="evidence" value="ECO:0007669"/>
    <property type="project" value="TreeGrafter"/>
</dbReference>
<dbReference type="GO" id="GO:0005634">
    <property type="term" value="C:nucleus"/>
    <property type="evidence" value="ECO:0007669"/>
    <property type="project" value="TreeGrafter"/>
</dbReference>
<dbReference type="GO" id="GO:0010427">
    <property type="term" value="F:abscisic acid binding"/>
    <property type="evidence" value="ECO:0007669"/>
    <property type="project" value="InterPro"/>
</dbReference>
<dbReference type="GO" id="GO:0004864">
    <property type="term" value="F:protein phosphatase inhibitor activity"/>
    <property type="evidence" value="ECO:0007669"/>
    <property type="project" value="InterPro"/>
</dbReference>
<dbReference type="GO" id="GO:0038023">
    <property type="term" value="F:signaling receptor activity"/>
    <property type="evidence" value="ECO:0007669"/>
    <property type="project" value="InterPro"/>
</dbReference>
<dbReference type="GO" id="GO:0009738">
    <property type="term" value="P:abscisic acid-activated signaling pathway"/>
    <property type="evidence" value="ECO:0007669"/>
    <property type="project" value="InterPro"/>
</dbReference>
<dbReference type="GO" id="GO:0006952">
    <property type="term" value="P:defense response"/>
    <property type="evidence" value="ECO:0007669"/>
    <property type="project" value="UniProtKB-KW"/>
</dbReference>
<dbReference type="CDD" id="cd07816">
    <property type="entry name" value="Bet_v1-like"/>
    <property type="match status" value="1"/>
</dbReference>
<dbReference type="FunFam" id="3.30.530.20:FF:000007">
    <property type="entry name" value="Major pollen allergen Bet v 1-A"/>
    <property type="match status" value="1"/>
</dbReference>
<dbReference type="Gene3D" id="3.30.530.20">
    <property type="match status" value="1"/>
</dbReference>
<dbReference type="InterPro" id="IPR000916">
    <property type="entry name" value="Bet_v_I/MLP"/>
</dbReference>
<dbReference type="InterPro" id="IPR024949">
    <property type="entry name" value="Bet_v_I_allergen"/>
</dbReference>
<dbReference type="InterPro" id="IPR050279">
    <property type="entry name" value="Plant_def-hormone_signal"/>
</dbReference>
<dbReference type="InterPro" id="IPR023393">
    <property type="entry name" value="START-like_dom_sf"/>
</dbReference>
<dbReference type="PANTHER" id="PTHR31213">
    <property type="entry name" value="OS08G0374000 PROTEIN-RELATED"/>
    <property type="match status" value="1"/>
</dbReference>
<dbReference type="PANTHER" id="PTHR31213:SF55">
    <property type="entry name" value="STRESS-INDUCED PROTEIN SAM22"/>
    <property type="match status" value="1"/>
</dbReference>
<dbReference type="Pfam" id="PF00407">
    <property type="entry name" value="Bet_v_1"/>
    <property type="match status" value="1"/>
</dbReference>
<dbReference type="PRINTS" id="PR00634">
    <property type="entry name" value="BETALLERGEN"/>
</dbReference>
<dbReference type="SUPFAM" id="SSF55961">
    <property type="entry name" value="Bet v1-like"/>
    <property type="match status" value="1"/>
</dbReference>
<dbReference type="PROSITE" id="PS00451">
    <property type="entry name" value="PATHOGENESIS_BETVI"/>
    <property type="match status" value="1"/>
</dbReference>
<proteinExistence type="evidence at protein level"/>
<keyword id="KW-0002">3D-structure</keyword>
<keyword id="KW-0020">Allergen</keyword>
<keyword id="KW-0568">Pathogenesis-related protein</keyword>
<keyword id="KW-0611">Plant defense</keyword>
<keyword id="KW-1185">Reference proteome</keyword>
<sequence>MGVFTYESEFTSEIPPPRLFKAFVLDADNLVPKIAPQAIKHSEILEGDGGPGTIKKITFGEGSQYGYVKHKIDSIDKENYSYSYTLIEGDALGDTLEKISYETKLVASPSGGSIIKSTSHYHTKGNVEIKEEHVKAGKEKASNLFKLIETYLKGHPDAYN</sequence>
<comment type="allergen">
    <text>Causes an allergic reaction in human. Binds to IgE and induces a strong histamine release.</text>
</comment>
<comment type="similarity">
    <text evidence="1">Belongs to the BetVI family.</text>
</comment>
<reference key="1">
    <citation type="journal article" date="1997" name="Mol. Immunol.">
        <title>Molecular cloning, expression and characterization of Pru a 1, the major cherry allergen.</title>
        <authorList>
            <person name="Scheurer S."/>
            <person name="Metzner K."/>
            <person name="Haustein D."/>
            <person name="Vieths S."/>
        </authorList>
    </citation>
    <scope>NUCLEOTIDE SEQUENCE [MRNA]</scope>
</reference>
<reference key="2">
    <citation type="journal article" date="2001" name="J. Biol. Chem.">
        <title>Allergic cross-reactivity made visible. Solution structure of the major cherry allergen Pru av 1.</title>
        <authorList>
            <person name="Neudecker P."/>
            <person name="Schweimer K."/>
            <person name="Nerkamp J."/>
            <person name="Scheurer S."/>
            <person name="Vieths S."/>
            <person name="Sticht H."/>
            <person name="Rosch P."/>
        </authorList>
    </citation>
    <scope>STRUCTURE BY NMR</scope>
</reference>